<feature type="chain" id="PRO_1000099028" description="NH(3)-dependent NAD(+) synthetase">
    <location>
        <begin position="1"/>
        <end position="275"/>
    </location>
</feature>
<feature type="binding site" evidence="1">
    <location>
        <begin position="47"/>
        <end position="54"/>
    </location>
    <ligand>
        <name>ATP</name>
        <dbReference type="ChEBI" id="CHEBI:30616"/>
    </ligand>
</feature>
<feature type="binding site" evidence="1">
    <location>
        <position position="53"/>
    </location>
    <ligand>
        <name>Mg(2+)</name>
        <dbReference type="ChEBI" id="CHEBI:18420"/>
    </ligand>
</feature>
<feature type="binding site" evidence="1">
    <location>
        <position position="141"/>
    </location>
    <ligand>
        <name>deamido-NAD(+)</name>
        <dbReference type="ChEBI" id="CHEBI:58437"/>
    </ligand>
</feature>
<feature type="binding site" evidence="1">
    <location>
        <position position="161"/>
    </location>
    <ligand>
        <name>ATP</name>
        <dbReference type="ChEBI" id="CHEBI:30616"/>
    </ligand>
</feature>
<feature type="binding site" evidence="1">
    <location>
        <position position="166"/>
    </location>
    <ligand>
        <name>Mg(2+)</name>
        <dbReference type="ChEBI" id="CHEBI:18420"/>
    </ligand>
</feature>
<feature type="binding site" evidence="1">
    <location>
        <position position="174"/>
    </location>
    <ligand>
        <name>deamido-NAD(+)</name>
        <dbReference type="ChEBI" id="CHEBI:58437"/>
    </ligand>
</feature>
<feature type="binding site" evidence="1">
    <location>
        <position position="181"/>
    </location>
    <ligand>
        <name>deamido-NAD(+)</name>
        <dbReference type="ChEBI" id="CHEBI:58437"/>
    </ligand>
</feature>
<feature type="binding site" evidence="1">
    <location>
        <position position="190"/>
    </location>
    <ligand>
        <name>ATP</name>
        <dbReference type="ChEBI" id="CHEBI:30616"/>
    </ligand>
</feature>
<feature type="binding site" evidence="1">
    <location>
        <position position="212"/>
    </location>
    <ligand>
        <name>ATP</name>
        <dbReference type="ChEBI" id="CHEBI:30616"/>
    </ligand>
</feature>
<feature type="binding site" evidence="1">
    <location>
        <begin position="261"/>
        <end position="262"/>
    </location>
    <ligand>
        <name>deamido-NAD(+)</name>
        <dbReference type="ChEBI" id="CHEBI:58437"/>
    </ligand>
</feature>
<sequence>MRPLQAEIIKALGVQATIDPETEVRRSVDFLKAYLKKNTFLKTYVLGISGGQDSSLAGALTEKAMQEMRAETGDDAYQFIAVRLPYGEQADEADAMAAIDFMHADVVKRVNIKPSVDAMVAAVEADGSKISDFNKGNIKARMRMIAQYAIAGNNAGAVIGTDHAAEAVTGFYTKFGDGGADLTPLYRLDKRQGAALLKVLGAPAHLYEKAPTADLEDNRPALPDEVALGVKYKDIDDYLEGKDVSDQAAETIEKWYQKTAHKRHLPITVFDNFWK</sequence>
<protein>
    <recommendedName>
        <fullName evidence="1">NH(3)-dependent NAD(+) synthetase</fullName>
        <ecNumber evidence="1">6.3.1.5</ecNumber>
    </recommendedName>
</protein>
<dbReference type="EC" id="6.3.1.5" evidence="1"/>
<dbReference type="EMBL" id="FM177140">
    <property type="protein sequence ID" value="CAQ67101.1"/>
    <property type="molecule type" value="Genomic_DNA"/>
</dbReference>
<dbReference type="SMR" id="B3W8T2"/>
<dbReference type="KEGG" id="lcb:LCABL_20240"/>
<dbReference type="HOGENOM" id="CLU_059327_3_0_9"/>
<dbReference type="UniPathway" id="UPA00253">
    <property type="reaction ID" value="UER00333"/>
</dbReference>
<dbReference type="GO" id="GO:0005737">
    <property type="term" value="C:cytoplasm"/>
    <property type="evidence" value="ECO:0007669"/>
    <property type="project" value="InterPro"/>
</dbReference>
<dbReference type="GO" id="GO:0005524">
    <property type="term" value="F:ATP binding"/>
    <property type="evidence" value="ECO:0007669"/>
    <property type="project" value="UniProtKB-UniRule"/>
</dbReference>
<dbReference type="GO" id="GO:0004359">
    <property type="term" value="F:glutaminase activity"/>
    <property type="evidence" value="ECO:0007669"/>
    <property type="project" value="InterPro"/>
</dbReference>
<dbReference type="GO" id="GO:0046872">
    <property type="term" value="F:metal ion binding"/>
    <property type="evidence" value="ECO:0007669"/>
    <property type="project" value="UniProtKB-KW"/>
</dbReference>
<dbReference type="GO" id="GO:0003952">
    <property type="term" value="F:NAD+ synthase (glutamine-hydrolyzing) activity"/>
    <property type="evidence" value="ECO:0007669"/>
    <property type="project" value="InterPro"/>
</dbReference>
<dbReference type="GO" id="GO:0008795">
    <property type="term" value="F:NAD+ synthase activity"/>
    <property type="evidence" value="ECO:0007669"/>
    <property type="project" value="UniProtKB-UniRule"/>
</dbReference>
<dbReference type="GO" id="GO:0009435">
    <property type="term" value="P:NAD biosynthetic process"/>
    <property type="evidence" value="ECO:0007669"/>
    <property type="project" value="UniProtKB-UniRule"/>
</dbReference>
<dbReference type="CDD" id="cd00553">
    <property type="entry name" value="NAD_synthase"/>
    <property type="match status" value="1"/>
</dbReference>
<dbReference type="FunFam" id="3.40.50.620:FF:000015">
    <property type="entry name" value="NH(3)-dependent NAD(+) synthetase"/>
    <property type="match status" value="1"/>
</dbReference>
<dbReference type="Gene3D" id="3.40.50.620">
    <property type="entry name" value="HUPs"/>
    <property type="match status" value="1"/>
</dbReference>
<dbReference type="HAMAP" id="MF_00193">
    <property type="entry name" value="NadE_ammonia_dep"/>
    <property type="match status" value="1"/>
</dbReference>
<dbReference type="InterPro" id="IPR022310">
    <property type="entry name" value="NAD/GMP_synthase"/>
</dbReference>
<dbReference type="InterPro" id="IPR003694">
    <property type="entry name" value="NAD_synthase"/>
</dbReference>
<dbReference type="InterPro" id="IPR022926">
    <property type="entry name" value="NH(3)-dep_NAD(+)_synth"/>
</dbReference>
<dbReference type="InterPro" id="IPR014729">
    <property type="entry name" value="Rossmann-like_a/b/a_fold"/>
</dbReference>
<dbReference type="NCBIfam" id="TIGR00552">
    <property type="entry name" value="nadE"/>
    <property type="match status" value="1"/>
</dbReference>
<dbReference type="NCBIfam" id="NF001979">
    <property type="entry name" value="PRK00768.1"/>
    <property type="match status" value="1"/>
</dbReference>
<dbReference type="PANTHER" id="PTHR23090">
    <property type="entry name" value="NH 3 /GLUTAMINE-DEPENDENT NAD + SYNTHETASE"/>
    <property type="match status" value="1"/>
</dbReference>
<dbReference type="PANTHER" id="PTHR23090:SF7">
    <property type="entry name" value="NH(3)-DEPENDENT NAD(+) SYNTHETASE"/>
    <property type="match status" value="1"/>
</dbReference>
<dbReference type="Pfam" id="PF02540">
    <property type="entry name" value="NAD_synthase"/>
    <property type="match status" value="1"/>
</dbReference>
<dbReference type="SUPFAM" id="SSF52402">
    <property type="entry name" value="Adenine nucleotide alpha hydrolases-like"/>
    <property type="match status" value="1"/>
</dbReference>
<name>NADE_LACCB</name>
<organism>
    <name type="scientific">Lacticaseibacillus casei (strain BL23)</name>
    <name type="common">Lactobacillus casei</name>
    <dbReference type="NCBI Taxonomy" id="543734"/>
    <lineage>
        <taxon>Bacteria</taxon>
        <taxon>Bacillati</taxon>
        <taxon>Bacillota</taxon>
        <taxon>Bacilli</taxon>
        <taxon>Lactobacillales</taxon>
        <taxon>Lactobacillaceae</taxon>
        <taxon>Lacticaseibacillus</taxon>
    </lineage>
</organism>
<accession>B3W8T2</accession>
<reference key="1">
    <citation type="submission" date="2008-06" db="EMBL/GenBank/DDBJ databases">
        <title>Lactobacillus casei BL23 complete genome sequence.</title>
        <authorList>
            <person name="Maze A."/>
            <person name="Boel G."/>
            <person name="Bourand A."/>
            <person name="Loux V."/>
            <person name="Gibrat J.F."/>
            <person name="Zuniga M."/>
            <person name="Hartke A."/>
            <person name="Deutscher J."/>
        </authorList>
    </citation>
    <scope>NUCLEOTIDE SEQUENCE [LARGE SCALE GENOMIC DNA]</scope>
    <source>
        <strain>BL23</strain>
    </source>
</reference>
<keyword id="KW-0067">ATP-binding</keyword>
<keyword id="KW-0436">Ligase</keyword>
<keyword id="KW-0460">Magnesium</keyword>
<keyword id="KW-0479">Metal-binding</keyword>
<keyword id="KW-0520">NAD</keyword>
<keyword id="KW-0547">Nucleotide-binding</keyword>
<gene>
    <name evidence="1" type="primary">nadE</name>
    <name type="ordered locus">LCABL_20240</name>
</gene>
<evidence type="ECO:0000255" key="1">
    <source>
        <dbReference type="HAMAP-Rule" id="MF_00193"/>
    </source>
</evidence>
<comment type="function">
    <text evidence="1">Catalyzes the ATP-dependent amidation of deamido-NAD to form NAD. Uses ammonia as a nitrogen source.</text>
</comment>
<comment type="catalytic activity">
    <reaction evidence="1">
        <text>deamido-NAD(+) + NH4(+) + ATP = AMP + diphosphate + NAD(+) + H(+)</text>
        <dbReference type="Rhea" id="RHEA:21188"/>
        <dbReference type="ChEBI" id="CHEBI:15378"/>
        <dbReference type="ChEBI" id="CHEBI:28938"/>
        <dbReference type="ChEBI" id="CHEBI:30616"/>
        <dbReference type="ChEBI" id="CHEBI:33019"/>
        <dbReference type="ChEBI" id="CHEBI:57540"/>
        <dbReference type="ChEBI" id="CHEBI:58437"/>
        <dbReference type="ChEBI" id="CHEBI:456215"/>
        <dbReference type="EC" id="6.3.1.5"/>
    </reaction>
</comment>
<comment type="pathway">
    <text evidence="1">Cofactor biosynthesis; NAD(+) biosynthesis; NAD(+) from deamido-NAD(+) (ammonia route): step 1/1.</text>
</comment>
<comment type="subunit">
    <text evidence="1">Homodimer.</text>
</comment>
<comment type="similarity">
    <text evidence="1">Belongs to the NAD synthetase family.</text>
</comment>
<proteinExistence type="inferred from homology"/>